<accession>Q9SX78</accession>
<accession>Q8LG06</accession>
<organism>
    <name type="scientific">Arabidopsis thaliana</name>
    <name type="common">Mouse-ear cress</name>
    <dbReference type="NCBI Taxonomy" id="3702"/>
    <lineage>
        <taxon>Eukaryota</taxon>
        <taxon>Viridiplantae</taxon>
        <taxon>Streptophyta</taxon>
        <taxon>Embryophyta</taxon>
        <taxon>Tracheophyta</taxon>
        <taxon>Spermatophyta</taxon>
        <taxon>Magnoliopsida</taxon>
        <taxon>eudicotyledons</taxon>
        <taxon>Gunneridae</taxon>
        <taxon>Pentapetalae</taxon>
        <taxon>rosids</taxon>
        <taxon>malvids</taxon>
        <taxon>Brassicales</taxon>
        <taxon>Brassicaceae</taxon>
        <taxon>Camelineae</taxon>
        <taxon>Arabidopsis</taxon>
    </lineage>
</organism>
<dbReference type="EC" id="3.1.1.1"/>
<dbReference type="EMBL" id="AC007519">
    <property type="protein sequence ID" value="AAD46039.1"/>
    <property type="molecule type" value="Genomic_DNA"/>
</dbReference>
<dbReference type="EMBL" id="CP002684">
    <property type="protein sequence ID" value="AEE32171.1"/>
    <property type="molecule type" value="Genomic_DNA"/>
</dbReference>
<dbReference type="EMBL" id="AY084535">
    <property type="protein sequence ID" value="AAM61103.1"/>
    <property type="molecule type" value="mRNA"/>
</dbReference>
<dbReference type="PIR" id="A96515">
    <property type="entry name" value="A96515"/>
</dbReference>
<dbReference type="RefSeq" id="NP_564507.1">
    <property type="nucleotide sequence ID" value="NM_103640.3"/>
</dbReference>
<dbReference type="SMR" id="Q9SX78"/>
<dbReference type="FunCoup" id="Q9SX78">
    <property type="interactions" value="105"/>
</dbReference>
<dbReference type="STRING" id="3702.Q9SX78"/>
<dbReference type="ESTHER" id="arath-F16N3.25">
    <property type="family name" value="Plant_carboxylesterase"/>
</dbReference>
<dbReference type="PaxDb" id="3702-AT1G47480.1"/>
<dbReference type="ProteomicsDB" id="220377"/>
<dbReference type="EnsemblPlants" id="AT1G47480.1">
    <property type="protein sequence ID" value="AT1G47480.1"/>
    <property type="gene ID" value="AT1G47480"/>
</dbReference>
<dbReference type="GeneID" id="841155"/>
<dbReference type="Gramene" id="AT1G47480.1">
    <property type="protein sequence ID" value="AT1G47480.1"/>
    <property type="gene ID" value="AT1G47480"/>
</dbReference>
<dbReference type="KEGG" id="ath:AT1G47480"/>
<dbReference type="Araport" id="AT1G47480"/>
<dbReference type="TAIR" id="AT1G47480"/>
<dbReference type="eggNOG" id="KOG1515">
    <property type="taxonomic scope" value="Eukaryota"/>
</dbReference>
<dbReference type="HOGENOM" id="CLU_012494_22_0_1"/>
<dbReference type="InParanoid" id="Q9SX78"/>
<dbReference type="OMA" id="YVEFEQV"/>
<dbReference type="PhylomeDB" id="Q9SX78"/>
<dbReference type="BioCyc" id="ARA:AT1G47480-MONOMER"/>
<dbReference type="PRO" id="PR:Q9SX78"/>
<dbReference type="Proteomes" id="UP000006548">
    <property type="component" value="Chromosome 1"/>
</dbReference>
<dbReference type="ExpressionAtlas" id="Q9SX78">
    <property type="expression patterns" value="baseline and differential"/>
</dbReference>
<dbReference type="GO" id="GO:0106435">
    <property type="term" value="F:carboxylesterase activity"/>
    <property type="evidence" value="ECO:0007669"/>
    <property type="project" value="UniProtKB-EC"/>
</dbReference>
<dbReference type="Gene3D" id="3.40.50.1820">
    <property type="entry name" value="alpha/beta hydrolase"/>
    <property type="match status" value="1"/>
</dbReference>
<dbReference type="InterPro" id="IPR013094">
    <property type="entry name" value="AB_hydrolase_3"/>
</dbReference>
<dbReference type="InterPro" id="IPR029058">
    <property type="entry name" value="AB_hydrolase_fold"/>
</dbReference>
<dbReference type="InterPro" id="IPR050466">
    <property type="entry name" value="Carboxylest/Gibb_receptor"/>
</dbReference>
<dbReference type="InterPro" id="IPR002168">
    <property type="entry name" value="Lipase_GDXG_HIS_AS"/>
</dbReference>
<dbReference type="PANTHER" id="PTHR23024">
    <property type="entry name" value="ARYLACETAMIDE DEACETYLASE"/>
    <property type="match status" value="1"/>
</dbReference>
<dbReference type="PANTHER" id="PTHR23024:SF577">
    <property type="entry name" value="CARBOXYLESTERASE 2-RELATED"/>
    <property type="match status" value="1"/>
</dbReference>
<dbReference type="Pfam" id="PF07859">
    <property type="entry name" value="Abhydrolase_3"/>
    <property type="match status" value="1"/>
</dbReference>
<dbReference type="SUPFAM" id="SSF53474">
    <property type="entry name" value="alpha/beta-Hydrolases"/>
    <property type="match status" value="1"/>
</dbReference>
<dbReference type="PROSITE" id="PS01173">
    <property type="entry name" value="LIPASE_GDXG_HIS"/>
    <property type="match status" value="1"/>
</dbReference>
<reference key="1">
    <citation type="journal article" date="2000" name="Nature">
        <title>Sequence and analysis of chromosome 1 of the plant Arabidopsis thaliana.</title>
        <authorList>
            <person name="Theologis A."/>
            <person name="Ecker J.R."/>
            <person name="Palm C.J."/>
            <person name="Federspiel N.A."/>
            <person name="Kaul S."/>
            <person name="White O."/>
            <person name="Alonso J."/>
            <person name="Altafi H."/>
            <person name="Araujo R."/>
            <person name="Bowman C.L."/>
            <person name="Brooks S.Y."/>
            <person name="Buehler E."/>
            <person name="Chan A."/>
            <person name="Chao Q."/>
            <person name="Chen H."/>
            <person name="Cheuk R.F."/>
            <person name="Chin C.W."/>
            <person name="Chung M.K."/>
            <person name="Conn L."/>
            <person name="Conway A.B."/>
            <person name="Conway A.R."/>
            <person name="Creasy T.H."/>
            <person name="Dewar K."/>
            <person name="Dunn P."/>
            <person name="Etgu P."/>
            <person name="Feldblyum T.V."/>
            <person name="Feng J.-D."/>
            <person name="Fong B."/>
            <person name="Fujii C.Y."/>
            <person name="Gill J.E."/>
            <person name="Goldsmith A.D."/>
            <person name="Haas B."/>
            <person name="Hansen N.F."/>
            <person name="Hughes B."/>
            <person name="Huizar L."/>
            <person name="Hunter J.L."/>
            <person name="Jenkins J."/>
            <person name="Johnson-Hopson C."/>
            <person name="Khan S."/>
            <person name="Khaykin E."/>
            <person name="Kim C.J."/>
            <person name="Koo H.L."/>
            <person name="Kremenetskaia I."/>
            <person name="Kurtz D.B."/>
            <person name="Kwan A."/>
            <person name="Lam B."/>
            <person name="Langin-Hooper S."/>
            <person name="Lee A."/>
            <person name="Lee J.M."/>
            <person name="Lenz C.A."/>
            <person name="Li J.H."/>
            <person name="Li Y.-P."/>
            <person name="Lin X."/>
            <person name="Liu S.X."/>
            <person name="Liu Z.A."/>
            <person name="Luros J.S."/>
            <person name="Maiti R."/>
            <person name="Marziali A."/>
            <person name="Militscher J."/>
            <person name="Miranda M."/>
            <person name="Nguyen M."/>
            <person name="Nierman W.C."/>
            <person name="Osborne B.I."/>
            <person name="Pai G."/>
            <person name="Peterson J."/>
            <person name="Pham P.K."/>
            <person name="Rizzo M."/>
            <person name="Rooney T."/>
            <person name="Rowley D."/>
            <person name="Sakano H."/>
            <person name="Salzberg S.L."/>
            <person name="Schwartz J.R."/>
            <person name="Shinn P."/>
            <person name="Southwick A.M."/>
            <person name="Sun H."/>
            <person name="Tallon L.J."/>
            <person name="Tambunga G."/>
            <person name="Toriumi M.J."/>
            <person name="Town C.D."/>
            <person name="Utterback T."/>
            <person name="Van Aken S."/>
            <person name="Vaysberg M."/>
            <person name="Vysotskaia V.S."/>
            <person name="Walker M."/>
            <person name="Wu D."/>
            <person name="Yu G."/>
            <person name="Fraser C.M."/>
            <person name="Venter J.C."/>
            <person name="Davis R.W."/>
        </authorList>
    </citation>
    <scope>NUCLEOTIDE SEQUENCE [LARGE SCALE GENOMIC DNA]</scope>
    <source>
        <strain>cv. Columbia</strain>
    </source>
</reference>
<reference key="2">
    <citation type="journal article" date="2017" name="Plant J.">
        <title>Araport11: a complete reannotation of the Arabidopsis thaliana reference genome.</title>
        <authorList>
            <person name="Cheng C.Y."/>
            <person name="Krishnakumar V."/>
            <person name="Chan A.P."/>
            <person name="Thibaud-Nissen F."/>
            <person name="Schobel S."/>
            <person name="Town C.D."/>
        </authorList>
    </citation>
    <scope>GENOME REANNOTATION</scope>
    <source>
        <strain>cv. Columbia</strain>
    </source>
</reference>
<reference key="3">
    <citation type="submission" date="2002-03" db="EMBL/GenBank/DDBJ databases">
        <title>Full-length cDNA from Arabidopsis thaliana.</title>
        <authorList>
            <person name="Brover V.V."/>
            <person name="Troukhan M.E."/>
            <person name="Alexandrov N.A."/>
            <person name="Lu Y.-P."/>
            <person name="Flavell R.B."/>
            <person name="Feldmann K.A."/>
        </authorList>
    </citation>
    <scope>NUCLEOTIDE SEQUENCE [LARGE SCALE MRNA]</scope>
</reference>
<reference key="4">
    <citation type="journal article" date="2003" name="J. Mol. Evol.">
        <title>The carboxylesterase gene family from Arabidopsis thaliana.</title>
        <authorList>
            <person name="Marshall S.D."/>
            <person name="Putterill J.J."/>
            <person name="Plummer K.M."/>
            <person name="Newcomb R.D."/>
        </authorList>
    </citation>
    <scope>TISSUE SPECIFICITY</scope>
    <scope>GENE FAMILY</scope>
    <scope>NOMENCLATURE</scope>
</reference>
<sequence length="314" mass="35255">MESTKKQVSLELLPWLVVHTDGTVERLAGTEVCPPGLDPITGVFSKDIIIEPKTGLSARIYRPFSIQPGQKIPLMLYFHGGAFLISSTSFPSYHTSLNKIVNQANVIAVSVNYRLAPEHPLPTAYEDSWTALKNIQAINEPWINDYADLDSLFLVGDSAGANISHHLAFRAKQSDQTLKIKGIGMIHPYFWGTQPIGAEIKDEARKQMVDGWWEFVCPSEKGSDDPWINPFADGSPDLGGLGCERVMITVAEKDILNERGKMYYERLVKSEWKGKVEIMETKEKDHVFHIFEPDCDEAMEMVRCLALFINQVEA</sequence>
<feature type="chain" id="PRO_0000402548" description="Probable carboxylesterase 2">
    <location>
        <begin position="1"/>
        <end position="314"/>
    </location>
</feature>
<feature type="short sequence motif" description="Involved in the stabilization of the negatively charged intermediate by the formation of the oxyanion hole" evidence="2">
    <location>
        <begin position="79"/>
        <end position="81"/>
    </location>
</feature>
<feature type="active site" evidence="2">
    <location>
        <position position="158"/>
    </location>
</feature>
<feature type="active site" evidence="2">
    <location>
        <position position="254"/>
    </location>
</feature>
<feature type="active site" evidence="2">
    <location>
        <position position="286"/>
    </location>
</feature>
<feature type="sequence conflict" description="In Ref. 3; AAM61103." evidence="4" ref="3">
    <original>KN</original>
    <variation>NT</variation>
    <location>
        <begin position="133"/>
        <end position="134"/>
    </location>
</feature>
<feature type="sequence conflict" description="In Ref. 3; AAM61103." evidence="4" ref="3">
    <original>L</original>
    <variation>I</variation>
    <location>
        <position position="152"/>
    </location>
</feature>
<feature type="sequence conflict" description="In Ref. 3; AAM61103." evidence="4" ref="3">
    <original>L</original>
    <variation>V</variation>
    <location>
        <position position="178"/>
    </location>
</feature>
<feature type="sequence conflict" description="In Ref. 3; AAM61103." evidence="4" ref="3">
    <original>R</original>
    <variation>M</variation>
    <location>
        <position position="205"/>
    </location>
</feature>
<feature type="sequence conflict" description="In Ref. 3; AAM61103." evidence="4" ref="3">
    <original>E</original>
    <variation>K</variation>
    <location>
        <position position="220"/>
    </location>
</feature>
<feature type="sequence conflict" description="In Ref. 3; AAM61103." evidence="4" ref="3">
    <original>Y</original>
    <variation>F</variation>
    <location>
        <position position="264"/>
    </location>
</feature>
<protein>
    <recommendedName>
        <fullName>Probable carboxylesterase 2</fullName>
    </recommendedName>
    <alternativeName>
        <fullName>AtCXE2</fullName>
        <ecNumber>3.1.1.1</ecNumber>
    </alternativeName>
</protein>
<comment type="function">
    <text evidence="1">Carboxylesterase acting on esters with varying acyl chain length.</text>
</comment>
<comment type="catalytic activity">
    <reaction>
        <text>a carboxylic ester + H2O = an alcohol + a carboxylate + H(+)</text>
        <dbReference type="Rhea" id="RHEA:21164"/>
        <dbReference type="ChEBI" id="CHEBI:15377"/>
        <dbReference type="ChEBI" id="CHEBI:15378"/>
        <dbReference type="ChEBI" id="CHEBI:29067"/>
        <dbReference type="ChEBI" id="CHEBI:30879"/>
        <dbReference type="ChEBI" id="CHEBI:33308"/>
        <dbReference type="EC" id="3.1.1.1"/>
    </reaction>
</comment>
<comment type="tissue specificity">
    <text evidence="3">Expressed in roots and flowers.</text>
</comment>
<comment type="similarity">
    <text evidence="4">Belongs to the 'GDXG' lipolytic enzyme family.</text>
</comment>
<keyword id="KW-0378">Hydrolase</keyword>
<keyword id="KW-1185">Reference proteome</keyword>
<keyword id="KW-0719">Serine esterase</keyword>
<evidence type="ECO:0000250" key="1"/>
<evidence type="ECO:0000250" key="2">
    <source>
        <dbReference type="UniProtKB" id="Q5NUF3"/>
    </source>
</evidence>
<evidence type="ECO:0000269" key="3">
    <source>
    </source>
</evidence>
<evidence type="ECO:0000305" key="4"/>
<name>CXE2_ARATH</name>
<proteinExistence type="evidence at transcript level"/>
<gene>
    <name type="primary">CXE2</name>
    <name type="ordered locus">At1g47480</name>
    <name type="ORF">F16N3.25</name>
</gene>